<comment type="function">
    <text evidence="1">Transfers a succinyl group from succinyl-CoA to L-homoserine, forming succinyl-L-homoserine.</text>
</comment>
<comment type="catalytic activity">
    <reaction evidence="1">
        <text>L-homoserine + succinyl-CoA = O-succinyl-L-homoserine + CoA</text>
        <dbReference type="Rhea" id="RHEA:22008"/>
        <dbReference type="ChEBI" id="CHEBI:57287"/>
        <dbReference type="ChEBI" id="CHEBI:57292"/>
        <dbReference type="ChEBI" id="CHEBI:57476"/>
        <dbReference type="ChEBI" id="CHEBI:57661"/>
        <dbReference type="EC" id="2.3.1.46"/>
    </reaction>
</comment>
<comment type="pathway">
    <text evidence="1">Amino-acid biosynthesis; L-methionine biosynthesis via de novo pathway; O-succinyl-L-homoserine from L-homoserine: step 1/1.</text>
</comment>
<comment type="subcellular location">
    <subcellularLocation>
        <location evidence="1">Cytoplasm</location>
    </subcellularLocation>
</comment>
<comment type="similarity">
    <text evidence="1">Belongs to the MetA family.</text>
</comment>
<name>METAS_KLEP7</name>
<gene>
    <name evidence="1" type="primary">metAS</name>
    <name type="ordered locus">KPN78578_43250</name>
    <name type="ORF">KPN_04394</name>
</gene>
<reference key="1">
    <citation type="submission" date="2006-09" db="EMBL/GenBank/DDBJ databases">
        <authorList>
            <consortium name="The Klebsiella pneumonia Genome Sequencing Project"/>
            <person name="McClelland M."/>
            <person name="Sanderson E.K."/>
            <person name="Spieth J."/>
            <person name="Clifton W.S."/>
            <person name="Latreille P."/>
            <person name="Sabo A."/>
            <person name="Pepin K."/>
            <person name="Bhonagiri V."/>
            <person name="Porwollik S."/>
            <person name="Ali J."/>
            <person name="Wilson R.K."/>
        </authorList>
    </citation>
    <scope>NUCLEOTIDE SEQUENCE [LARGE SCALE GENOMIC DNA]</scope>
    <source>
        <strain>ATCC 700721 / MGH 78578</strain>
    </source>
</reference>
<protein>
    <recommendedName>
        <fullName evidence="1">Homoserine O-succinyltransferase</fullName>
        <shortName evidence="1">HST</shortName>
        <ecNumber evidence="1">2.3.1.46</ecNumber>
    </recommendedName>
    <alternativeName>
        <fullName evidence="1">Homoserine transsuccinylase</fullName>
        <shortName evidence="1">HTS</shortName>
    </alternativeName>
</protein>
<dbReference type="EC" id="2.3.1.46" evidence="1"/>
<dbReference type="EMBL" id="CP000647">
    <property type="protein sequence ID" value="ABR79749.1"/>
    <property type="molecule type" value="Genomic_DNA"/>
</dbReference>
<dbReference type="SMR" id="A6TGR5"/>
<dbReference type="STRING" id="272620.KPN_04394"/>
<dbReference type="PaxDb" id="272620-KPN_04394"/>
<dbReference type="EnsemblBacteria" id="ABR79749">
    <property type="protein sequence ID" value="ABR79749"/>
    <property type="gene ID" value="KPN_04394"/>
</dbReference>
<dbReference type="KEGG" id="kpn:KPN_04394"/>
<dbReference type="HOGENOM" id="CLU_057851_0_1_6"/>
<dbReference type="UniPathway" id="UPA00051">
    <property type="reaction ID" value="UER00075"/>
</dbReference>
<dbReference type="Proteomes" id="UP000000265">
    <property type="component" value="Chromosome"/>
</dbReference>
<dbReference type="GO" id="GO:0005737">
    <property type="term" value="C:cytoplasm"/>
    <property type="evidence" value="ECO:0007669"/>
    <property type="project" value="UniProtKB-SubCell"/>
</dbReference>
<dbReference type="GO" id="GO:0004414">
    <property type="term" value="F:homoserine O-acetyltransferase activity"/>
    <property type="evidence" value="ECO:0007669"/>
    <property type="project" value="UniProtKB-UniRule"/>
</dbReference>
<dbReference type="GO" id="GO:0008899">
    <property type="term" value="F:homoserine O-succinyltransferase activity"/>
    <property type="evidence" value="ECO:0007669"/>
    <property type="project" value="UniProtKB-EC"/>
</dbReference>
<dbReference type="GO" id="GO:0019281">
    <property type="term" value="P:L-methionine biosynthetic process from homoserine via O-succinyl-L-homoserine and cystathionine"/>
    <property type="evidence" value="ECO:0007669"/>
    <property type="project" value="InterPro"/>
</dbReference>
<dbReference type="CDD" id="cd03131">
    <property type="entry name" value="GATase1_HTS"/>
    <property type="match status" value="1"/>
</dbReference>
<dbReference type="FunFam" id="3.40.50.880:FF:000004">
    <property type="entry name" value="Homoserine O-succinyltransferase"/>
    <property type="match status" value="1"/>
</dbReference>
<dbReference type="Gene3D" id="3.40.50.880">
    <property type="match status" value="1"/>
</dbReference>
<dbReference type="HAMAP" id="MF_00295">
    <property type="entry name" value="MetA_acyltransf"/>
    <property type="match status" value="1"/>
</dbReference>
<dbReference type="InterPro" id="IPR029062">
    <property type="entry name" value="Class_I_gatase-like"/>
</dbReference>
<dbReference type="InterPro" id="IPR005697">
    <property type="entry name" value="HST_MetA"/>
</dbReference>
<dbReference type="InterPro" id="IPR033752">
    <property type="entry name" value="MetA_family"/>
</dbReference>
<dbReference type="NCBIfam" id="TIGR01001">
    <property type="entry name" value="metA"/>
    <property type="match status" value="1"/>
</dbReference>
<dbReference type="PANTHER" id="PTHR20919">
    <property type="entry name" value="HOMOSERINE O-SUCCINYLTRANSFERASE"/>
    <property type="match status" value="1"/>
</dbReference>
<dbReference type="PANTHER" id="PTHR20919:SF0">
    <property type="entry name" value="HOMOSERINE O-SUCCINYLTRANSFERASE"/>
    <property type="match status" value="1"/>
</dbReference>
<dbReference type="Pfam" id="PF04204">
    <property type="entry name" value="HTS"/>
    <property type="match status" value="1"/>
</dbReference>
<dbReference type="PIRSF" id="PIRSF000450">
    <property type="entry name" value="H_ser_succinyltr"/>
    <property type="match status" value="1"/>
</dbReference>
<dbReference type="SUPFAM" id="SSF52317">
    <property type="entry name" value="Class I glutamine amidotransferase-like"/>
    <property type="match status" value="1"/>
</dbReference>
<evidence type="ECO:0000255" key="1">
    <source>
        <dbReference type="HAMAP-Rule" id="MF_00295"/>
    </source>
</evidence>
<proteinExistence type="inferred from homology"/>
<keyword id="KW-0012">Acyltransferase</keyword>
<keyword id="KW-0028">Amino-acid biosynthesis</keyword>
<keyword id="KW-0963">Cytoplasm</keyword>
<keyword id="KW-0486">Methionine biosynthesis</keyword>
<keyword id="KW-0808">Transferase</keyword>
<accession>A6TGR5</accession>
<sequence length="309" mass="35692">MPIRVQDELPAVNFLRNENVFVMTTTRATTQEIRPLKVLILNLMPKKIETENQFLRLLSNSPLQVDIQLLRIDARESRNTPAEHLNNFYCNFDEICDQNFDGLIVTGAPLGLVEFNDVAYWPQIKQVLEWAKDHVTSTLFVCWAVQAALNILYGIPKQTRAEKISGVYEHHILHPHALLTRGFDDSFLAPHSRYADFPAGLIRDYTDLEILAETEEGDAYLFASKDKRIAFVTGHPEYDANTLASEYFRDVEAGLNPEIPHNYFPQNDPQNKPRATWRSHGNLLFANWLNYYVYQITPYDLRHMNPTLE</sequence>
<feature type="chain" id="PRO_1000021818" description="Homoserine O-succinyltransferase">
    <location>
        <begin position="1"/>
        <end position="309"/>
    </location>
</feature>
<feature type="active site" description="Acyl-thioester intermediate" evidence="1">
    <location>
        <position position="142"/>
    </location>
</feature>
<feature type="active site" description="Proton acceptor" evidence="1">
    <location>
        <position position="235"/>
    </location>
</feature>
<feature type="active site" evidence="1">
    <location>
        <position position="237"/>
    </location>
</feature>
<feature type="binding site" evidence="1">
    <location>
        <position position="163"/>
    </location>
    <ligand>
        <name>substrate</name>
    </ligand>
</feature>
<feature type="binding site" evidence="1">
    <location>
        <position position="192"/>
    </location>
    <ligand>
        <name>substrate</name>
    </ligand>
</feature>
<feature type="binding site" evidence="1">
    <location>
        <position position="249"/>
    </location>
    <ligand>
        <name>substrate</name>
    </ligand>
</feature>
<feature type="site" description="Important for acyl-CoA specificity" evidence="1">
    <location>
        <position position="111"/>
    </location>
</feature>
<feature type="site" description="Important for substrate specificity" evidence="1">
    <location>
        <position position="192"/>
    </location>
</feature>
<organism>
    <name type="scientific">Klebsiella pneumoniae subsp. pneumoniae (strain ATCC 700721 / MGH 78578)</name>
    <dbReference type="NCBI Taxonomy" id="272620"/>
    <lineage>
        <taxon>Bacteria</taxon>
        <taxon>Pseudomonadati</taxon>
        <taxon>Pseudomonadota</taxon>
        <taxon>Gammaproteobacteria</taxon>
        <taxon>Enterobacterales</taxon>
        <taxon>Enterobacteriaceae</taxon>
        <taxon>Klebsiella/Raoultella group</taxon>
        <taxon>Klebsiella</taxon>
        <taxon>Klebsiella pneumoniae complex</taxon>
    </lineage>
</organism>